<feature type="chain" id="PRO_0000193542" description="Cytochrome b-c1 complex subunit 6, mitochondrial">
    <location>
        <begin position="1"/>
        <end position="147"/>
    </location>
</feature>
<feature type="region of interest" description="Disordered" evidence="2">
    <location>
        <begin position="25"/>
        <end position="89"/>
    </location>
</feature>
<feature type="compositionally biased region" description="Acidic residues" evidence="2">
    <location>
        <begin position="41"/>
        <end position="78"/>
    </location>
</feature>
<feature type="compositionally biased region" description="Basic and acidic residues" evidence="2">
    <location>
        <begin position="79"/>
        <end position="89"/>
    </location>
</feature>
<feature type="disulfide bond" evidence="5 6 7 8 10 11">
    <location>
        <begin position="101"/>
        <end position="123"/>
    </location>
</feature>
<feature type="sequence conflict" description="In Ref. 1; CAA25220." evidence="15" ref="1">
    <original>G</original>
    <variation>D</variation>
    <location>
        <position position="2"/>
    </location>
</feature>
<feature type="helix" evidence="17">
    <location>
        <begin position="77"/>
        <end position="86"/>
    </location>
</feature>
<feature type="helix" evidence="17">
    <location>
        <begin position="89"/>
        <end position="110"/>
    </location>
</feature>
<feature type="strand" evidence="19">
    <location>
        <begin position="111"/>
        <end position="113"/>
    </location>
</feature>
<feature type="helix" evidence="17">
    <location>
        <begin position="114"/>
        <end position="116"/>
    </location>
</feature>
<feature type="strand" evidence="18">
    <location>
        <begin position="117"/>
        <end position="119"/>
    </location>
</feature>
<feature type="helix" evidence="17">
    <location>
        <begin position="124"/>
        <end position="142"/>
    </location>
</feature>
<feature type="helix" evidence="17">
    <location>
        <begin position="143"/>
        <end position="145"/>
    </location>
</feature>
<accession>P00127</accession>
<accession>D6VTR6</accession>
<proteinExistence type="evidence at protein level"/>
<gene>
    <name type="primary">QCR6</name>
    <name type="synonym">UCR6</name>
    <name type="ordered locus">YFR033C</name>
</gene>
<dbReference type="EMBL" id="X00551">
    <property type="protein sequence ID" value="CAA25220.1"/>
    <property type="molecule type" value="Genomic_DNA"/>
</dbReference>
<dbReference type="EMBL" id="D50617">
    <property type="protein sequence ID" value="BAA09272.1"/>
    <property type="molecule type" value="Genomic_DNA"/>
</dbReference>
<dbReference type="EMBL" id="BK006940">
    <property type="protein sequence ID" value="DAA12476.1"/>
    <property type="molecule type" value="Genomic_DNA"/>
</dbReference>
<dbReference type="PIR" id="S56288">
    <property type="entry name" value="RDBYUC"/>
</dbReference>
<dbReference type="RefSeq" id="NP_116691.3">
    <property type="nucleotide sequence ID" value="NM_001179998.3"/>
</dbReference>
<dbReference type="PDB" id="1EZV">
    <property type="method" value="X-ray"/>
    <property type="resolution" value="2.30 A"/>
    <property type="chains" value="H=74-147"/>
</dbReference>
<dbReference type="PDB" id="1KB9">
    <property type="method" value="X-ray"/>
    <property type="resolution" value="2.30 A"/>
    <property type="chains" value="F=74-147"/>
</dbReference>
<dbReference type="PDB" id="1KYO">
    <property type="method" value="X-ray"/>
    <property type="resolution" value="2.97 A"/>
    <property type="chains" value="F/Q=75-147"/>
</dbReference>
<dbReference type="PDB" id="1P84">
    <property type="method" value="X-ray"/>
    <property type="resolution" value="2.50 A"/>
    <property type="chains" value="F=74-147"/>
</dbReference>
<dbReference type="PDB" id="2IBZ">
    <property type="method" value="X-ray"/>
    <property type="resolution" value="2.30 A"/>
    <property type="chains" value="H=74-147"/>
</dbReference>
<dbReference type="PDB" id="3CX5">
    <property type="method" value="X-ray"/>
    <property type="resolution" value="1.90 A"/>
    <property type="chains" value="F/Q=2-147"/>
</dbReference>
<dbReference type="PDB" id="3CXH">
    <property type="method" value="X-ray"/>
    <property type="resolution" value="2.50 A"/>
    <property type="chains" value="F/Q=2-147"/>
</dbReference>
<dbReference type="PDB" id="4PD4">
    <property type="method" value="X-ray"/>
    <property type="resolution" value="3.04 A"/>
    <property type="chains" value="F=74-147"/>
</dbReference>
<dbReference type="PDB" id="6GIQ">
    <property type="method" value="EM"/>
    <property type="resolution" value="3.23 A"/>
    <property type="chains" value="F/Q=1-147"/>
</dbReference>
<dbReference type="PDB" id="6HU9">
    <property type="method" value="EM"/>
    <property type="resolution" value="3.35 A"/>
    <property type="chains" value="F/Q=1-147"/>
</dbReference>
<dbReference type="PDB" id="6T0B">
    <property type="method" value="EM"/>
    <property type="resolution" value="2.80 A"/>
    <property type="chains" value="F/Q=1-147"/>
</dbReference>
<dbReference type="PDB" id="6T15">
    <property type="method" value="EM"/>
    <property type="resolution" value="3.29 A"/>
    <property type="chains" value="F/Q=1-147"/>
</dbReference>
<dbReference type="PDB" id="8E7S">
    <property type="method" value="EM"/>
    <property type="resolution" value="3.20 A"/>
    <property type="chains" value="G/g=1-147"/>
</dbReference>
<dbReference type="PDB" id="8EC0">
    <property type="method" value="EM"/>
    <property type="resolution" value="3.30 A"/>
    <property type="chains" value="G/g=1-147"/>
</dbReference>
<dbReference type="PDB" id="8YHQ">
    <property type="method" value="EM"/>
    <property type="resolution" value="2.42 A"/>
    <property type="chains" value="F/O=73-147"/>
</dbReference>
<dbReference type="PDB" id="8YIN">
    <property type="method" value="EM"/>
    <property type="resolution" value="2.74 A"/>
    <property type="chains" value="F/Q=73-147"/>
</dbReference>
<dbReference type="PDB" id="8ZMT">
    <property type="method" value="EM"/>
    <property type="resolution" value="2.52 A"/>
    <property type="chains" value="F/Q=73-147"/>
</dbReference>
<dbReference type="PDB" id="9ETZ">
    <property type="method" value="EM"/>
    <property type="resolution" value="2.40 A"/>
    <property type="chains" value="F/Q=73-147"/>
</dbReference>
<dbReference type="PDBsum" id="1EZV"/>
<dbReference type="PDBsum" id="1KB9"/>
<dbReference type="PDBsum" id="1KYO"/>
<dbReference type="PDBsum" id="1P84"/>
<dbReference type="PDBsum" id="2IBZ"/>
<dbReference type="PDBsum" id="3CX5"/>
<dbReference type="PDBsum" id="3CXH"/>
<dbReference type="PDBsum" id="4PD4"/>
<dbReference type="PDBsum" id="6GIQ"/>
<dbReference type="PDBsum" id="6HU9"/>
<dbReference type="PDBsum" id="6T0B"/>
<dbReference type="PDBsum" id="6T15"/>
<dbReference type="PDBsum" id="8E7S"/>
<dbReference type="PDBsum" id="8EC0"/>
<dbReference type="PDBsum" id="8YHQ"/>
<dbReference type="PDBsum" id="8YIN"/>
<dbReference type="PDBsum" id="8ZMT"/>
<dbReference type="PDBsum" id="9ETZ"/>
<dbReference type="EMDB" id="EMD-0262"/>
<dbReference type="EMDB" id="EMD-10317"/>
<dbReference type="EMDB" id="EMD-19963"/>
<dbReference type="EMDB" id="EMD-27940"/>
<dbReference type="EMDB" id="EMD-28011"/>
<dbReference type="EMDB" id="EMD-60256"/>
<dbReference type="SMR" id="P00127"/>
<dbReference type="BioGRID" id="31190">
    <property type="interactions" value="140"/>
</dbReference>
<dbReference type="ComplexPortal" id="CPX-567">
    <property type="entry name" value="Mitochondrial respiratory chain complex III"/>
</dbReference>
<dbReference type="DIP" id="DIP-1621N"/>
<dbReference type="FunCoup" id="P00127">
    <property type="interactions" value="181"/>
</dbReference>
<dbReference type="IntAct" id="P00127">
    <property type="interactions" value="31"/>
</dbReference>
<dbReference type="MINT" id="P00127"/>
<dbReference type="STRING" id="4932.YFR033C"/>
<dbReference type="CarbonylDB" id="P00127"/>
<dbReference type="PaxDb" id="4932-YFR033C"/>
<dbReference type="PeptideAtlas" id="P00127"/>
<dbReference type="EnsemblFungi" id="YFR033C_mRNA">
    <property type="protein sequence ID" value="YFR033C"/>
    <property type="gene ID" value="YFR033C"/>
</dbReference>
<dbReference type="GeneID" id="850593"/>
<dbReference type="KEGG" id="sce:YFR033C"/>
<dbReference type="AGR" id="SGD:S000001929"/>
<dbReference type="SGD" id="S000001929">
    <property type="gene designation" value="QCR6"/>
</dbReference>
<dbReference type="VEuPathDB" id="FungiDB:YFR033C"/>
<dbReference type="eggNOG" id="KOG4763">
    <property type="taxonomic scope" value="Eukaryota"/>
</dbReference>
<dbReference type="GeneTree" id="ENSGT00390000003860"/>
<dbReference type="HOGENOM" id="CLU_115913_0_1_1"/>
<dbReference type="InParanoid" id="P00127"/>
<dbReference type="OMA" id="NEDCVEE"/>
<dbReference type="OrthoDB" id="405848at2759"/>
<dbReference type="BioCyc" id="MetaCyc:YFR033C-MONOMER"/>
<dbReference type="BioCyc" id="YEAST:YFR033C-MONOMER"/>
<dbReference type="Reactome" id="R-SCE-611105">
    <property type="pathway name" value="Respiratory electron transport"/>
</dbReference>
<dbReference type="Reactome" id="R-SCE-9865878">
    <property type="pathway name" value="Complex III assembly"/>
</dbReference>
<dbReference type="BioGRID-ORCS" id="850593">
    <property type="hits" value="3 hits in 10 CRISPR screens"/>
</dbReference>
<dbReference type="CD-CODE" id="E03F929F">
    <property type="entry name" value="Stress granule"/>
</dbReference>
<dbReference type="EvolutionaryTrace" id="P00127"/>
<dbReference type="PRO" id="PR:P00127"/>
<dbReference type="Proteomes" id="UP000002311">
    <property type="component" value="Chromosome VI"/>
</dbReference>
<dbReference type="RNAct" id="P00127">
    <property type="molecule type" value="protein"/>
</dbReference>
<dbReference type="GO" id="GO:0005743">
    <property type="term" value="C:mitochondrial inner membrane"/>
    <property type="evidence" value="ECO:0000314"/>
    <property type="project" value="ComplexPortal"/>
</dbReference>
<dbReference type="GO" id="GO:0005758">
    <property type="term" value="C:mitochondrial intermembrane space"/>
    <property type="evidence" value="ECO:0000314"/>
    <property type="project" value="SGD"/>
</dbReference>
<dbReference type="GO" id="GO:0005739">
    <property type="term" value="C:mitochondrion"/>
    <property type="evidence" value="ECO:0007005"/>
    <property type="project" value="SGD"/>
</dbReference>
<dbReference type="GO" id="GO:0034399">
    <property type="term" value="C:nuclear periphery"/>
    <property type="evidence" value="ECO:0000314"/>
    <property type="project" value="SGD"/>
</dbReference>
<dbReference type="GO" id="GO:0045275">
    <property type="term" value="C:respiratory chain complex III"/>
    <property type="evidence" value="ECO:0000314"/>
    <property type="project" value="SGD"/>
</dbReference>
<dbReference type="GO" id="GO:0009060">
    <property type="term" value="P:aerobic respiration"/>
    <property type="evidence" value="ECO:0000315"/>
    <property type="project" value="SGD"/>
</dbReference>
<dbReference type="GO" id="GO:0045333">
    <property type="term" value="P:cellular respiration"/>
    <property type="evidence" value="ECO:0000314"/>
    <property type="project" value="ComplexPortal"/>
</dbReference>
<dbReference type="GO" id="GO:0006122">
    <property type="term" value="P:mitochondrial electron transport, ubiquinol to cytochrome c"/>
    <property type="evidence" value="ECO:0000314"/>
    <property type="project" value="ComplexPortal"/>
</dbReference>
<dbReference type="GO" id="GO:1902600">
    <property type="term" value="P:proton transmembrane transport"/>
    <property type="evidence" value="ECO:0007669"/>
    <property type="project" value="GOC"/>
</dbReference>
<dbReference type="DisProt" id="DP00853"/>
<dbReference type="FunFam" id="1.10.287.20:FF:000003">
    <property type="entry name" value="Cytochrome b-c1 complex subunit 6"/>
    <property type="match status" value="1"/>
</dbReference>
<dbReference type="Gene3D" id="1.10.287.20">
    <property type="entry name" value="Ubiquinol-cytochrome C reductase hinge domain"/>
    <property type="match status" value="1"/>
</dbReference>
<dbReference type="InterPro" id="IPR023184">
    <property type="entry name" value="Ubol_cytC_Rdtase_hinge_dom"/>
</dbReference>
<dbReference type="InterPro" id="IPR036811">
    <property type="entry name" value="Ubol_cytC_Rdtase_hinge_dom_sf"/>
</dbReference>
<dbReference type="Pfam" id="PF02320">
    <property type="entry name" value="UCR_hinge"/>
    <property type="match status" value="1"/>
</dbReference>
<dbReference type="SUPFAM" id="SSF81531">
    <property type="entry name" value="Non-heme 11 kDa protein of cytochrome bc1 complex (Ubiquinol-cytochrome c reductase)"/>
    <property type="match status" value="1"/>
</dbReference>
<comment type="function">
    <text evidence="1 16">Component of the ubiquinol-cytochrome c oxidoreductase, a multisubunit transmembrane complex that is part of the mitochondrial electron transport chain which drives oxidative phosphorylation. The respiratory chain contains 3 multisubunit complexes succinate dehydrogenase (complex II, CII), ubiquinol-cytochrome c oxidoreductase (cytochrome b-c1 complex, complex III, CIII) and cytochrome c oxidase (complex IV, CIV), that cooperate to transfer electrons derived from NADH and succinate to molecular oxygen, creating an electrochemical gradient over the inner membrane that drives transmembrane transport and the ATP synthase. The cytochrome b-c1 complex catalyzes electron transfer from ubiquinol to cytochrome c, linking this redox reaction to translocation of protons across the mitochondrial inner membrane, with protons being carried across the membrane as hydrogens on the quinol. In the process called Q cycle, 2 protons are consumed from the matrix, 4 protons are released into the intermembrane space and 2 electrons are passed to cytochrome c.</text>
</comment>
<comment type="subunit">
    <text evidence="3 4 5 7 11 13 14">Component of the ubiquinol-cytochrome c oxidoreductase (cytochrome b-c1 complex, complex III, CIII), a multisubunit enzyme composed of 10 subunits. The complex is composed of 3 respiratory subunits cytochrome b (COB), cytochrome c1 (CYT1) and Rieske protein (RIP1), 2 core protein subunits COR1 and QCR2, and 5 low-molecular weight protein subunits QCR6, QCR7, QCR8, QCR9 and QCR10 (PubMed:10873857, PubMed:11880631, PubMed:18390544, PubMed:30598554). The complex exists as an obligatory dimer and forms supercomplexes (SCs) in the inner mitochondrial membrane with a monomer or a dimer of cytochrome c oxidase (complex IV, CIV), resulting in 2 different assemblies (supercomplexes III(2)IV and III(2)IV(2)) (PubMed:10764779, PubMed:10775262, PubMed:30598554, PubMed:30598556). QCR6 interacts with COX5A at the CIII-CIV interface (PubMed:30598554).</text>
</comment>
<comment type="subcellular location">
    <subcellularLocation>
        <location evidence="11 12 13">Mitochondrion inner membrane</location>
        <topology evidence="11 13">Peripheral membrane protein</topology>
        <orientation evidence="11 13">Intermembrane side</orientation>
    </subcellularLocation>
</comment>
<comment type="miscellaneous">
    <text evidence="9">Present with 4490 molecules/cell in log phase SD medium.</text>
</comment>
<comment type="similarity">
    <text evidence="15">Belongs to the UQCRH/QCR6 family.</text>
</comment>
<reference key="1">
    <citation type="journal article" date="1984" name="EMBO J.">
        <title>The DNA sequence of the nuclear gene coding for the 17-kd subunit VI of the yeast ubiquinol-cytochrome c reductase: a protein with an extremely high content of acidic amino acids.</title>
        <authorList>
            <person name="van Loon A.P.G.M."/>
            <person name="de Groot R.J."/>
            <person name="de Haan M."/>
            <person name="Dekker A."/>
            <person name="Grivell L.A."/>
        </authorList>
    </citation>
    <scope>NUCLEOTIDE SEQUENCE [GENOMIC DNA]</scope>
    <source>
        <strain>ATCC 28383 / FL100 / VTT C-80102</strain>
    </source>
</reference>
<reference key="2">
    <citation type="journal article" date="1995" name="Nat. Genet.">
        <title>Analysis of the nucleotide sequence of chromosome VI from Saccharomyces cerevisiae.</title>
        <authorList>
            <person name="Murakami Y."/>
            <person name="Naitou M."/>
            <person name="Hagiwara H."/>
            <person name="Shibata T."/>
            <person name="Ozawa M."/>
            <person name="Sasanuma S."/>
            <person name="Sasanuma M."/>
            <person name="Tsuchiya Y."/>
            <person name="Soeda E."/>
            <person name="Yokoyama K."/>
            <person name="Yamazaki M."/>
            <person name="Tashiro H."/>
            <person name="Eki T."/>
        </authorList>
    </citation>
    <scope>NUCLEOTIDE SEQUENCE [LARGE SCALE GENOMIC DNA]</scope>
    <source>
        <strain>ATCC 204508 / S288c</strain>
    </source>
</reference>
<reference key="3">
    <citation type="journal article" date="2014" name="G3 (Bethesda)">
        <title>The reference genome sequence of Saccharomyces cerevisiae: Then and now.</title>
        <authorList>
            <person name="Engel S.R."/>
            <person name="Dietrich F.S."/>
            <person name="Fisk D.G."/>
            <person name="Binkley G."/>
            <person name="Balakrishnan R."/>
            <person name="Costanzo M.C."/>
            <person name="Dwight S.S."/>
            <person name="Hitz B.C."/>
            <person name="Karra K."/>
            <person name="Nash R.S."/>
            <person name="Weng S."/>
            <person name="Wong E.D."/>
            <person name="Lloyd P."/>
            <person name="Skrzypek M.S."/>
            <person name="Miyasato S.R."/>
            <person name="Simison M."/>
            <person name="Cherry J.M."/>
        </authorList>
    </citation>
    <scope>GENOME REANNOTATION</scope>
    <source>
        <strain>ATCC 204508 / S288c</strain>
    </source>
</reference>
<reference key="4">
    <citation type="journal article" date="1996" name="Yeast">
        <title>Fifteen open reading frames in a 30.8 kb region of the right arm of chromosome VI from Saccharomyces cerevisiae.</title>
        <authorList>
            <person name="Eki T."/>
            <person name="Naitou M."/>
            <person name="Hagiwara H."/>
            <person name="Abe M."/>
            <person name="Ozawa M."/>
            <person name="Sasanuma S."/>
            <person name="Sasanuma M."/>
            <person name="Tsuchiya Y."/>
            <person name="Shibata T."/>
            <person name="Watanabe K."/>
            <person name="Ono A."/>
            <person name="Yamazaki M."/>
            <person name="Tashiro H."/>
            <person name="Hanaoka F."/>
            <person name="Murakami Y."/>
        </authorList>
    </citation>
    <scope>NUCLEOTIDE SEQUENCE [GENOMIC DNA]</scope>
    <source>
        <strain>ATCC 204511 / S288c / AB972</strain>
    </source>
</reference>
<reference key="5">
    <citation type="journal article" date="2000" name="EMBO J.">
        <title>Supercomplexes in the respiratory chains of yeast and mammalian mitochondria.</title>
        <authorList>
            <person name="Schaegger H."/>
            <person name="Pfeiffer K."/>
        </authorList>
    </citation>
    <scope>FORMATION OF CYTOCHROME BC1-CYTOCHROME C OXIDASE SUPERCOMPLEX</scope>
</reference>
<reference key="6">
    <citation type="journal article" date="2000" name="J. Biol. Chem.">
        <title>The cytochrome bc1 and cytochrome c oxidase complexes associate to form a single supracomplex in yeast mitochondria.</title>
        <authorList>
            <person name="Cruciat C.M."/>
            <person name="Brunner S."/>
            <person name="Baumann F."/>
            <person name="Neupert W."/>
            <person name="Stuart R.A."/>
        </authorList>
    </citation>
    <scope>FORMATION OF CYTOCHROME BC1-CYTOCHROME C OXIDASE SUPERCOMPLEX</scope>
</reference>
<reference key="7">
    <citation type="journal article" date="2003" name="Nature">
        <title>Global analysis of protein expression in yeast.</title>
        <authorList>
            <person name="Ghaemmaghami S."/>
            <person name="Huh W.-K."/>
            <person name="Bower K."/>
            <person name="Howson R.W."/>
            <person name="Belle A."/>
            <person name="Dephoure N."/>
            <person name="O'Shea E.K."/>
            <person name="Weissman J.S."/>
        </authorList>
    </citation>
    <scope>LEVEL OF PROTEIN EXPRESSION [LARGE SCALE ANALYSIS]</scope>
</reference>
<reference key="8">
    <citation type="journal article" date="2012" name="Mol. Cell. Proteomics">
        <title>Intermembrane space proteome of yeast mitochondria.</title>
        <authorList>
            <person name="Voegtle F.N."/>
            <person name="Burkhart J.M."/>
            <person name="Rao S."/>
            <person name="Gerbeth C."/>
            <person name="Hinrichs J."/>
            <person name="Martinou J.C."/>
            <person name="Chacinska A."/>
            <person name="Sickmann A."/>
            <person name="Zahedi R.P."/>
            <person name="Meisinger C."/>
        </authorList>
    </citation>
    <scope>IDENTIFICATION BY MASS SPECTROMETRY</scope>
    <scope>SUBCELLULAR LOCATION [LARGE SCALE ANALYSIS]</scope>
</reference>
<reference key="9">
    <citation type="journal article" date="2000" name="Structure">
        <title>Structure at 2.3 A resolution of the cytochrome bc1 complex from the yeast Saccharomyces cerevisiae co-crystallized with an antibody Fv fragment.</title>
        <authorList>
            <person name="Hunte C."/>
            <person name="Koepke J."/>
            <person name="Lange C."/>
            <person name="Rossmanith T."/>
            <person name="Michel H."/>
        </authorList>
    </citation>
    <scope>X-RAY CRYSTALLOGRAPHY (2.3 ANGSTROMS) OF 74-147</scope>
    <scope>DISULFIDE BOND</scope>
</reference>
<reference key="10">
    <citation type="journal article" date="2001" name="EMBO J.">
        <title>Specific roles of protein-phospholipid interactions in the yeast cytochrome bc1 complex structure.</title>
        <authorList>
            <person name="Lange C."/>
            <person name="Nett J.H."/>
            <person name="Trumpower B.L."/>
            <person name="Hunte C."/>
        </authorList>
    </citation>
    <scope>X-RAY CRYSTALLOGRAPHY (2.30 ANGSTROMS) OF 74-147</scope>
    <scope>DISULFIDE BOND</scope>
</reference>
<reference key="11">
    <citation type="journal article" date="2002" name="Proc. Natl. Acad. Sci. U.S.A.">
        <title>Crystal structure of the yeast cytochrome bc1 complex with its bound substrate cytochrome c.</title>
        <authorList>
            <person name="Lange C."/>
            <person name="Hunte C."/>
        </authorList>
    </citation>
    <scope>X-RAY CRYSTALLOGRAPHY (2.97 ANGSTROMS) OF 75-147</scope>
    <scope>DISULFIDE BOND</scope>
</reference>
<reference key="12">
    <citation type="journal article" date="2003" name="J. Biol. Chem.">
        <title>Structure of the yeast cytochrome bc1 complex with a hydroxyquinone anion Qo site inhibitor bound.</title>
        <authorList>
            <person name="Palsdottir H."/>
            <person name="Lojero C.G."/>
            <person name="Trumpower B.L."/>
            <person name="Hunte C."/>
        </authorList>
    </citation>
    <scope>X-RAY CRYSTALLOGRAPHY (2.50 ANGSTROMS) OF 74-147</scope>
    <scope>DISULFIDE BOND</scope>
</reference>
<reference key="13">
    <citation type="journal article" date="2007" name="J. Mol. Biol.">
        <title>A comparison of stigmatellin conformations, free and bound to the photosynthetic reaction center and the cytochrome bc1 complex.</title>
        <authorList>
            <person name="Lancaster C.R."/>
            <person name="Hunte C."/>
            <person name="Kelley J."/>
            <person name="Trumpower B.L."/>
            <person name="Ditchfield R."/>
        </authorList>
    </citation>
    <scope>X-RAY CRYSTALLOGRAPHY (2.30 ANGSTROMS) OF 74-147</scope>
    <scope>DISULFIDE BOND</scope>
</reference>
<reference key="14">
    <citation type="journal article" date="2008" name="J. Biol. Chem.">
        <title>Structure of complex III with bound cytochrome c in reduced state and definition of a minimal core interface for electron transfer.</title>
        <authorList>
            <person name="Solmaz S.R."/>
            <person name="Hunte C."/>
        </authorList>
    </citation>
    <scope>X-RAY CRYSTALLOGRAPHY (1.90 ANGSTROMS) OF 2-147</scope>
    <scope>DISULFIDE BOND</scope>
</reference>
<reference key="15">
    <citation type="journal article" date="2019" name="Nat. Struct. Mol. Biol.">
        <title>Cryo-EM structure of the yeast respiratory supercomplex.</title>
        <authorList>
            <person name="Rathore S."/>
            <person name="Berndtsson J."/>
            <person name="Marin-Buera L."/>
            <person name="Conrad J."/>
            <person name="Carroni M."/>
            <person name="Brzezinski P."/>
            <person name="Ott M."/>
        </authorList>
    </citation>
    <scope>STRUCTURE BY ELECTRON MICROSCOPY (3.23 ANGSTROMS)</scope>
</reference>
<reference key="16">
    <citation type="journal article" date="2019" name="Nat. Struct. Mol. Biol.">
        <title>Structure of yeast cytochrome c oxidase in a supercomplex with cytochrome bc1.</title>
        <authorList>
            <person name="Hartley A.M."/>
            <person name="Lukoyanova N."/>
            <person name="Zhang Y."/>
            <person name="Cabrera-Orefice A."/>
            <person name="Arnold S."/>
            <person name="Meunier B."/>
            <person name="Pinotsis N."/>
            <person name="Marechal A."/>
        </authorList>
    </citation>
    <scope>STRUCTURE BY ELECTRON MICROSCOPY (3.35 ANGSTROMS)</scope>
</reference>
<organism>
    <name type="scientific">Saccharomyces cerevisiae (strain ATCC 204508 / S288c)</name>
    <name type="common">Baker's yeast</name>
    <dbReference type="NCBI Taxonomy" id="559292"/>
    <lineage>
        <taxon>Eukaryota</taxon>
        <taxon>Fungi</taxon>
        <taxon>Dikarya</taxon>
        <taxon>Ascomycota</taxon>
        <taxon>Saccharomycotina</taxon>
        <taxon>Saccharomycetes</taxon>
        <taxon>Saccharomycetales</taxon>
        <taxon>Saccharomycetaceae</taxon>
        <taxon>Saccharomyces</taxon>
    </lineage>
</organism>
<name>QCR6_YEAST</name>
<protein>
    <recommendedName>
        <fullName>Cytochrome b-c1 complex subunit 6, mitochondrial</fullName>
    </recommendedName>
    <alternativeName>
        <fullName>Complex III subunit 6</fullName>
    </alternativeName>
    <alternativeName>
        <fullName>Complex III subunit VI</fullName>
    </alternativeName>
    <alternativeName>
        <fullName>Cytochrome c1 non-heme 17 kDa protein</fullName>
    </alternativeName>
    <alternativeName>
        <fullName>Mitochondrial hinge protein</fullName>
    </alternativeName>
    <alternativeName>
        <fullName>Ubiquinol-cytochrome c oxidoreductase subunit 6</fullName>
    </alternativeName>
    <alternativeName>
        <fullName>Ubiquinol-cytochrome c reductase 17 kDa protein</fullName>
    </alternativeName>
</protein>
<sequence>MGMLELVGEYWEQLKITVVPVVAAAEDDDNEQHEEKAAEGEEKEEENGDEDEDEDEDEDDDDDDDEDEEEEEEVTDQLEDLREHFKNTEEGKALVHHYEECAERVKIQQQQPGYADLEHKEDCVEEFFHLQHYLDTATAPRLFDKLK</sequence>
<keyword id="KW-0002">3D-structure</keyword>
<keyword id="KW-1015">Disulfide bond</keyword>
<keyword id="KW-0249">Electron transport</keyword>
<keyword id="KW-0472">Membrane</keyword>
<keyword id="KW-0496">Mitochondrion</keyword>
<keyword id="KW-0999">Mitochondrion inner membrane</keyword>
<keyword id="KW-1185">Reference proteome</keyword>
<keyword id="KW-0679">Respiratory chain</keyword>
<keyword id="KW-0813">Transport</keyword>
<evidence type="ECO:0000250" key="1">
    <source>
        <dbReference type="UniProtKB" id="P07919"/>
    </source>
</evidence>
<evidence type="ECO:0000256" key="2">
    <source>
        <dbReference type="SAM" id="MobiDB-lite"/>
    </source>
</evidence>
<evidence type="ECO:0000269" key="3">
    <source>
    </source>
</evidence>
<evidence type="ECO:0000269" key="4">
    <source>
    </source>
</evidence>
<evidence type="ECO:0000269" key="5">
    <source>
    </source>
</evidence>
<evidence type="ECO:0000269" key="6">
    <source>
    </source>
</evidence>
<evidence type="ECO:0000269" key="7">
    <source>
    </source>
</evidence>
<evidence type="ECO:0000269" key="8">
    <source>
    </source>
</evidence>
<evidence type="ECO:0000269" key="9">
    <source>
    </source>
</evidence>
<evidence type="ECO:0000269" key="10">
    <source>
    </source>
</evidence>
<evidence type="ECO:0000269" key="11">
    <source>
    </source>
</evidence>
<evidence type="ECO:0000269" key="12">
    <source>
    </source>
</evidence>
<evidence type="ECO:0000269" key="13">
    <source>
    </source>
</evidence>
<evidence type="ECO:0000269" key="14">
    <source>
    </source>
</evidence>
<evidence type="ECO:0000305" key="15"/>
<evidence type="ECO:0000305" key="16">
    <source>
    </source>
</evidence>
<evidence type="ECO:0007829" key="17">
    <source>
        <dbReference type="PDB" id="3CX5"/>
    </source>
</evidence>
<evidence type="ECO:0007829" key="18">
    <source>
        <dbReference type="PDB" id="6T0B"/>
    </source>
</evidence>
<evidence type="ECO:0007829" key="19">
    <source>
        <dbReference type="PDB" id="9ETZ"/>
    </source>
</evidence>